<reference key="1">
    <citation type="journal article" date="2007" name="Proc. Natl. Acad. Sci. U.S.A.">
        <title>Deep-sea vent epsilon-proteobacterial genomes provide insights into emergence of pathogens.</title>
        <authorList>
            <person name="Nakagawa S."/>
            <person name="Takaki Y."/>
            <person name="Shimamura S."/>
            <person name="Reysenbach A.-L."/>
            <person name="Takai K."/>
            <person name="Horikoshi K."/>
        </authorList>
    </citation>
    <scope>NUCLEOTIDE SEQUENCE [LARGE SCALE GENOMIC DNA]</scope>
    <source>
        <strain>SB155-2</strain>
    </source>
</reference>
<comment type="function">
    <text evidence="1">Part of the Sec protein translocase complex. Interacts with the SecYEG preprotein conducting channel. Has a central role in coupling the hydrolysis of ATP to the transfer of proteins into and across the cell membrane, serving as an ATP-driven molecular motor driving the stepwise translocation of polypeptide chains across the membrane.</text>
</comment>
<comment type="catalytic activity">
    <reaction evidence="1">
        <text>ATP + H2O + cellular proteinSide 1 = ADP + phosphate + cellular proteinSide 2.</text>
        <dbReference type="EC" id="7.4.2.8"/>
    </reaction>
</comment>
<comment type="cofactor">
    <cofactor evidence="1">
        <name>Zn(2+)</name>
        <dbReference type="ChEBI" id="CHEBI:29105"/>
    </cofactor>
    <text evidence="1">May bind 1 zinc ion per subunit.</text>
</comment>
<comment type="subunit">
    <text evidence="1">Monomer and homodimer. Part of the essential Sec protein translocation apparatus which comprises SecA, SecYEG and auxiliary proteins SecDF-YajC and YidC.</text>
</comment>
<comment type="subcellular location">
    <subcellularLocation>
        <location evidence="1">Cell inner membrane</location>
        <topology evidence="1">Peripheral membrane protein</topology>
        <orientation evidence="1">Cytoplasmic side</orientation>
    </subcellularLocation>
    <subcellularLocation>
        <location evidence="1">Cytoplasm</location>
    </subcellularLocation>
    <text evidence="1">Distribution is 50-50.</text>
</comment>
<comment type="similarity">
    <text evidence="1">Belongs to the SecA family.</text>
</comment>
<evidence type="ECO:0000255" key="1">
    <source>
        <dbReference type="HAMAP-Rule" id="MF_01382"/>
    </source>
</evidence>
<evidence type="ECO:0000256" key="2">
    <source>
        <dbReference type="SAM" id="MobiDB-lite"/>
    </source>
</evidence>
<feature type="chain" id="PRO_0000320866" description="Protein translocase subunit SecA">
    <location>
        <begin position="1"/>
        <end position="863"/>
    </location>
</feature>
<feature type="region of interest" description="Disordered" evidence="2">
    <location>
        <begin position="818"/>
        <end position="842"/>
    </location>
</feature>
<feature type="binding site" evidence="1">
    <location>
        <position position="88"/>
    </location>
    <ligand>
        <name>ATP</name>
        <dbReference type="ChEBI" id="CHEBI:30616"/>
    </ligand>
</feature>
<feature type="binding site" evidence="1">
    <location>
        <begin position="106"/>
        <end position="110"/>
    </location>
    <ligand>
        <name>ATP</name>
        <dbReference type="ChEBI" id="CHEBI:30616"/>
    </ligand>
</feature>
<feature type="binding site" evidence="1">
    <location>
        <position position="496"/>
    </location>
    <ligand>
        <name>ATP</name>
        <dbReference type="ChEBI" id="CHEBI:30616"/>
    </ligand>
</feature>
<feature type="binding site" evidence="1">
    <location>
        <position position="836"/>
    </location>
    <ligand>
        <name>Zn(2+)</name>
        <dbReference type="ChEBI" id="CHEBI:29105"/>
    </ligand>
</feature>
<feature type="binding site" evidence="1">
    <location>
        <position position="838"/>
    </location>
    <ligand>
        <name>Zn(2+)</name>
        <dbReference type="ChEBI" id="CHEBI:29105"/>
    </ligand>
</feature>
<feature type="binding site" evidence="1">
    <location>
        <position position="847"/>
    </location>
    <ligand>
        <name>Zn(2+)</name>
        <dbReference type="ChEBI" id="CHEBI:29105"/>
    </ligand>
</feature>
<feature type="binding site" evidence="1">
    <location>
        <position position="848"/>
    </location>
    <ligand>
        <name>Zn(2+)</name>
        <dbReference type="ChEBI" id="CHEBI:29105"/>
    </ligand>
</feature>
<name>SECA_NITSB</name>
<keyword id="KW-0067">ATP-binding</keyword>
<keyword id="KW-0997">Cell inner membrane</keyword>
<keyword id="KW-1003">Cell membrane</keyword>
<keyword id="KW-0963">Cytoplasm</keyword>
<keyword id="KW-0472">Membrane</keyword>
<keyword id="KW-0479">Metal-binding</keyword>
<keyword id="KW-0547">Nucleotide-binding</keyword>
<keyword id="KW-0653">Protein transport</keyword>
<keyword id="KW-1185">Reference proteome</keyword>
<keyword id="KW-1278">Translocase</keyword>
<keyword id="KW-0811">Translocation</keyword>
<keyword id="KW-0813">Transport</keyword>
<keyword id="KW-0862">Zinc</keyword>
<gene>
    <name evidence="1" type="primary">secA</name>
    <name type="ordered locus">NIS_0830</name>
</gene>
<organism>
    <name type="scientific">Nitratiruptor sp. (strain SB155-2)</name>
    <dbReference type="NCBI Taxonomy" id="387092"/>
    <lineage>
        <taxon>Bacteria</taxon>
        <taxon>Pseudomonadati</taxon>
        <taxon>Campylobacterota</taxon>
        <taxon>Epsilonproteobacteria</taxon>
        <taxon>Nautiliales</taxon>
        <taxon>Nitratiruptoraceae</taxon>
        <taxon>Nitratiruptor</taxon>
    </lineage>
</organism>
<sequence>MIKGVVNKIFGTKNDREIKRYQKRVAKINALEPKYEKLTDEELKKAFNELRQKVKSGQMSMDEALEDSFAITREASKRVLGMRHYDVQLIGGMVLHEGKIAEMKTGEGKTLVATLAVALNAMTDEGVHVVTVNDYLAKRDATEMGKLYEFLGYSTGCITSEIQDDQERKKQYQCDITYGTNNEFGFDYLRDNMKYSLDEIVQRGHNFAIVDEVDSILIDEARTPLIISGPTNRKLDNYVKADQIAKQLEKDKHFTVDEKDRVILLTQEGIAKAEELFGVENLYSLENAILAHHLDQALKANYLFQKDVDYVVRDGEVIIVDEFTGRLSEGRRFSEGLHQALEAKEGVPIQEESQTLADITFQNYFRLYKKLAGMTGTAQTEATEFSEIYGLEVISIPTNRPVIRKDLDDLIFKTEKEKFDAVVKKIKELHQKGQPVLVGTTSIEKNELLHKLLKKEKIPHAVLNAKHHEKEAEIIAQAGRKGAVTVATNMAGRGVDIKIDDEVRELGGLFILGTERHESRRIDNQLRGRAGRQGDPGASQFFLSLEDNLLRIFGGDRIKNIMNRLGIEEGEHIESKMVTRAVEKAQKRVENMHFESRKHILEYDDVANEQRKTIYKFRQELLNPEYDIASKIRENRAEVVEELLSQSEIFPETPKDDFNLEKLSKVIQEELGTKIGVEEMKDKEYDELKNFLIERLEKEYEEKMGQLEEEQRREIERILYLQVLDNAWREHLYQMDILKTGIGLRGYNQKDPLVEYKKESFNLFMELVNRIKKEAIKTLHLIELRNEQEEEEIRRLEEELAKMEAQIAQEAVMQHGEEVKTEPVITKKKPARNEPCPCGSGKKYKHCCGKSGPKKGILAAANG</sequence>
<accession>A6Q383</accession>
<protein>
    <recommendedName>
        <fullName evidence="1">Protein translocase subunit SecA</fullName>
        <ecNumber evidence="1">7.4.2.8</ecNumber>
    </recommendedName>
</protein>
<dbReference type="EC" id="7.4.2.8" evidence="1"/>
<dbReference type="EMBL" id="AP009178">
    <property type="protein sequence ID" value="BAF69942.1"/>
    <property type="molecule type" value="Genomic_DNA"/>
</dbReference>
<dbReference type="RefSeq" id="WP_012082205.1">
    <property type="nucleotide sequence ID" value="NC_009662.1"/>
</dbReference>
<dbReference type="SMR" id="A6Q383"/>
<dbReference type="FunCoup" id="A6Q383">
    <property type="interactions" value="501"/>
</dbReference>
<dbReference type="STRING" id="387092.NIS_0830"/>
<dbReference type="KEGG" id="nis:NIS_0830"/>
<dbReference type="eggNOG" id="COG0653">
    <property type="taxonomic scope" value="Bacteria"/>
</dbReference>
<dbReference type="HOGENOM" id="CLU_005314_3_0_7"/>
<dbReference type="InParanoid" id="A6Q383"/>
<dbReference type="OrthoDB" id="9805579at2"/>
<dbReference type="Proteomes" id="UP000001118">
    <property type="component" value="Chromosome"/>
</dbReference>
<dbReference type="GO" id="GO:0031522">
    <property type="term" value="C:cell envelope Sec protein transport complex"/>
    <property type="evidence" value="ECO:0007669"/>
    <property type="project" value="TreeGrafter"/>
</dbReference>
<dbReference type="GO" id="GO:0005829">
    <property type="term" value="C:cytosol"/>
    <property type="evidence" value="ECO:0007669"/>
    <property type="project" value="TreeGrafter"/>
</dbReference>
<dbReference type="GO" id="GO:0005886">
    <property type="term" value="C:plasma membrane"/>
    <property type="evidence" value="ECO:0007669"/>
    <property type="project" value="UniProtKB-SubCell"/>
</dbReference>
<dbReference type="GO" id="GO:0005524">
    <property type="term" value="F:ATP binding"/>
    <property type="evidence" value="ECO:0007669"/>
    <property type="project" value="UniProtKB-UniRule"/>
</dbReference>
<dbReference type="GO" id="GO:0046872">
    <property type="term" value="F:metal ion binding"/>
    <property type="evidence" value="ECO:0007669"/>
    <property type="project" value="UniProtKB-KW"/>
</dbReference>
<dbReference type="GO" id="GO:0008564">
    <property type="term" value="F:protein-exporting ATPase activity"/>
    <property type="evidence" value="ECO:0007669"/>
    <property type="project" value="UniProtKB-EC"/>
</dbReference>
<dbReference type="GO" id="GO:0065002">
    <property type="term" value="P:intracellular protein transmembrane transport"/>
    <property type="evidence" value="ECO:0007669"/>
    <property type="project" value="UniProtKB-UniRule"/>
</dbReference>
<dbReference type="GO" id="GO:0017038">
    <property type="term" value="P:protein import"/>
    <property type="evidence" value="ECO:0007669"/>
    <property type="project" value="InterPro"/>
</dbReference>
<dbReference type="GO" id="GO:0006605">
    <property type="term" value="P:protein targeting"/>
    <property type="evidence" value="ECO:0007669"/>
    <property type="project" value="UniProtKB-UniRule"/>
</dbReference>
<dbReference type="GO" id="GO:0043952">
    <property type="term" value="P:protein transport by the Sec complex"/>
    <property type="evidence" value="ECO:0007669"/>
    <property type="project" value="TreeGrafter"/>
</dbReference>
<dbReference type="CDD" id="cd17928">
    <property type="entry name" value="DEXDc_SecA"/>
    <property type="match status" value="1"/>
</dbReference>
<dbReference type="CDD" id="cd18803">
    <property type="entry name" value="SF2_C_secA"/>
    <property type="match status" value="1"/>
</dbReference>
<dbReference type="FunFam" id="3.90.1440.10:FF:000003">
    <property type="entry name" value="Preprotein translocase SecA subunit"/>
    <property type="match status" value="1"/>
</dbReference>
<dbReference type="FunFam" id="3.40.50.300:FF:000429">
    <property type="entry name" value="Preprotein translocase subunit SecA"/>
    <property type="match status" value="1"/>
</dbReference>
<dbReference type="Gene3D" id="1.10.3060.10">
    <property type="entry name" value="Helical scaffold and wing domains of SecA"/>
    <property type="match status" value="1"/>
</dbReference>
<dbReference type="Gene3D" id="3.40.50.300">
    <property type="entry name" value="P-loop containing nucleotide triphosphate hydrolases"/>
    <property type="match status" value="3"/>
</dbReference>
<dbReference type="Gene3D" id="3.90.1440.10">
    <property type="entry name" value="SecA, preprotein cross-linking domain"/>
    <property type="match status" value="1"/>
</dbReference>
<dbReference type="HAMAP" id="MF_01382">
    <property type="entry name" value="SecA"/>
    <property type="match status" value="1"/>
</dbReference>
<dbReference type="InterPro" id="IPR014001">
    <property type="entry name" value="Helicase_ATP-bd"/>
</dbReference>
<dbReference type="InterPro" id="IPR001650">
    <property type="entry name" value="Helicase_C-like"/>
</dbReference>
<dbReference type="InterPro" id="IPR027417">
    <property type="entry name" value="P-loop_NTPase"/>
</dbReference>
<dbReference type="InterPro" id="IPR004027">
    <property type="entry name" value="SEC_C_motif"/>
</dbReference>
<dbReference type="InterPro" id="IPR000185">
    <property type="entry name" value="SecA"/>
</dbReference>
<dbReference type="InterPro" id="IPR011115">
    <property type="entry name" value="SecA_DEAD"/>
</dbReference>
<dbReference type="InterPro" id="IPR014018">
    <property type="entry name" value="SecA_motor_DEAD"/>
</dbReference>
<dbReference type="InterPro" id="IPR011130">
    <property type="entry name" value="SecA_preprotein_X-link_dom"/>
</dbReference>
<dbReference type="InterPro" id="IPR044722">
    <property type="entry name" value="SecA_SF2_C"/>
</dbReference>
<dbReference type="InterPro" id="IPR011116">
    <property type="entry name" value="SecA_Wing/Scaffold"/>
</dbReference>
<dbReference type="InterPro" id="IPR036266">
    <property type="entry name" value="SecA_Wing/Scaffold_sf"/>
</dbReference>
<dbReference type="InterPro" id="IPR036670">
    <property type="entry name" value="SecA_X-link_sf"/>
</dbReference>
<dbReference type="NCBIfam" id="NF006630">
    <property type="entry name" value="PRK09200.1"/>
    <property type="match status" value="1"/>
</dbReference>
<dbReference type="NCBIfam" id="NF009538">
    <property type="entry name" value="PRK12904.1"/>
    <property type="match status" value="1"/>
</dbReference>
<dbReference type="NCBIfam" id="TIGR00963">
    <property type="entry name" value="secA"/>
    <property type="match status" value="1"/>
</dbReference>
<dbReference type="PANTHER" id="PTHR30612:SF0">
    <property type="entry name" value="CHLOROPLAST PROTEIN-TRANSPORTING ATPASE"/>
    <property type="match status" value="1"/>
</dbReference>
<dbReference type="PANTHER" id="PTHR30612">
    <property type="entry name" value="SECA INNER MEMBRANE COMPONENT OF SEC PROTEIN SECRETION SYSTEM"/>
    <property type="match status" value="1"/>
</dbReference>
<dbReference type="Pfam" id="PF21090">
    <property type="entry name" value="P-loop_SecA"/>
    <property type="match status" value="1"/>
</dbReference>
<dbReference type="Pfam" id="PF02810">
    <property type="entry name" value="SEC-C"/>
    <property type="match status" value="1"/>
</dbReference>
<dbReference type="Pfam" id="PF07517">
    <property type="entry name" value="SecA_DEAD"/>
    <property type="match status" value="1"/>
</dbReference>
<dbReference type="Pfam" id="PF01043">
    <property type="entry name" value="SecA_PP_bind"/>
    <property type="match status" value="1"/>
</dbReference>
<dbReference type="Pfam" id="PF07516">
    <property type="entry name" value="SecA_SW"/>
    <property type="match status" value="1"/>
</dbReference>
<dbReference type="PRINTS" id="PR00906">
    <property type="entry name" value="SECA"/>
</dbReference>
<dbReference type="SMART" id="SM00490">
    <property type="entry name" value="HELICc"/>
    <property type="match status" value="1"/>
</dbReference>
<dbReference type="SMART" id="SM00957">
    <property type="entry name" value="SecA_DEAD"/>
    <property type="match status" value="1"/>
</dbReference>
<dbReference type="SMART" id="SM00958">
    <property type="entry name" value="SecA_PP_bind"/>
    <property type="match status" value="1"/>
</dbReference>
<dbReference type="SUPFAM" id="SSF81886">
    <property type="entry name" value="Helical scaffold and wing domains of SecA"/>
    <property type="match status" value="1"/>
</dbReference>
<dbReference type="SUPFAM" id="SSF52540">
    <property type="entry name" value="P-loop containing nucleoside triphosphate hydrolases"/>
    <property type="match status" value="2"/>
</dbReference>
<dbReference type="SUPFAM" id="SSF81767">
    <property type="entry name" value="Pre-protein crosslinking domain of SecA"/>
    <property type="match status" value="1"/>
</dbReference>
<dbReference type="PROSITE" id="PS51196">
    <property type="entry name" value="SECA_MOTOR_DEAD"/>
    <property type="match status" value="1"/>
</dbReference>
<proteinExistence type="inferred from homology"/>